<protein>
    <recommendedName>
        <fullName evidence="1">Ribosomal RNA small subunit methyltransferase H</fullName>
        <ecNumber evidence="1">2.1.1.199</ecNumber>
    </recommendedName>
    <alternativeName>
        <fullName evidence="1">16S rRNA m(4)C1402 methyltransferase</fullName>
    </alternativeName>
    <alternativeName>
        <fullName evidence="1">rRNA (cytosine-N(4)-)-methyltransferase RsmH</fullName>
    </alternativeName>
</protein>
<keyword id="KW-0963">Cytoplasm</keyword>
<keyword id="KW-0489">Methyltransferase</keyword>
<keyword id="KW-1185">Reference proteome</keyword>
<keyword id="KW-0698">rRNA processing</keyword>
<keyword id="KW-0949">S-adenosyl-L-methionine</keyword>
<keyword id="KW-0808">Transferase</keyword>
<feature type="chain" id="PRO_0000386877" description="Ribosomal RNA small subunit methyltransferase H">
    <location>
        <begin position="1"/>
        <end position="313"/>
    </location>
</feature>
<feature type="binding site" evidence="1">
    <location>
        <begin position="35"/>
        <end position="37"/>
    </location>
    <ligand>
        <name>S-adenosyl-L-methionine</name>
        <dbReference type="ChEBI" id="CHEBI:59789"/>
    </ligand>
</feature>
<feature type="binding site" evidence="1">
    <location>
        <position position="55"/>
    </location>
    <ligand>
        <name>S-adenosyl-L-methionine</name>
        <dbReference type="ChEBI" id="CHEBI:59789"/>
    </ligand>
</feature>
<feature type="binding site" evidence="1">
    <location>
        <position position="79"/>
    </location>
    <ligand>
        <name>S-adenosyl-L-methionine</name>
        <dbReference type="ChEBI" id="CHEBI:59789"/>
    </ligand>
</feature>
<feature type="binding site" evidence="1">
    <location>
        <position position="101"/>
    </location>
    <ligand>
        <name>S-adenosyl-L-methionine</name>
        <dbReference type="ChEBI" id="CHEBI:59789"/>
    </ligand>
</feature>
<feature type="binding site" evidence="1">
    <location>
        <position position="108"/>
    </location>
    <ligand>
        <name>S-adenosyl-L-methionine</name>
        <dbReference type="ChEBI" id="CHEBI:59789"/>
    </ligand>
</feature>
<organism>
    <name type="scientific">Escherichia coli O139:H28 (strain E24377A / ETEC)</name>
    <dbReference type="NCBI Taxonomy" id="331111"/>
    <lineage>
        <taxon>Bacteria</taxon>
        <taxon>Pseudomonadati</taxon>
        <taxon>Pseudomonadota</taxon>
        <taxon>Gammaproteobacteria</taxon>
        <taxon>Enterobacterales</taxon>
        <taxon>Enterobacteriaceae</taxon>
        <taxon>Escherichia</taxon>
    </lineage>
</organism>
<gene>
    <name evidence="1" type="primary">rsmH</name>
    <name type="synonym">mraW</name>
    <name type="ordered locus">EcE24377A_0084</name>
</gene>
<accession>A7ZHH3</accession>
<proteinExistence type="inferred from homology"/>
<dbReference type="EC" id="2.1.1.199" evidence="1"/>
<dbReference type="EMBL" id="CP000800">
    <property type="protein sequence ID" value="ABV16513.1"/>
    <property type="molecule type" value="Genomic_DNA"/>
</dbReference>
<dbReference type="RefSeq" id="WP_000970479.1">
    <property type="nucleotide sequence ID" value="NC_009801.1"/>
</dbReference>
<dbReference type="SMR" id="A7ZHH3"/>
<dbReference type="GeneID" id="86862592"/>
<dbReference type="KEGG" id="ecw:EcE24377A_0084"/>
<dbReference type="HOGENOM" id="CLU_038422_2_0_6"/>
<dbReference type="Proteomes" id="UP000001122">
    <property type="component" value="Chromosome"/>
</dbReference>
<dbReference type="GO" id="GO:0005737">
    <property type="term" value="C:cytoplasm"/>
    <property type="evidence" value="ECO:0007669"/>
    <property type="project" value="UniProtKB-SubCell"/>
</dbReference>
<dbReference type="GO" id="GO:0071424">
    <property type="term" value="F:rRNA (cytosine-N4-)-methyltransferase activity"/>
    <property type="evidence" value="ECO:0007669"/>
    <property type="project" value="UniProtKB-UniRule"/>
</dbReference>
<dbReference type="GO" id="GO:0070475">
    <property type="term" value="P:rRNA base methylation"/>
    <property type="evidence" value="ECO:0007669"/>
    <property type="project" value="UniProtKB-UniRule"/>
</dbReference>
<dbReference type="FunFam" id="1.10.150.170:FF:000001">
    <property type="entry name" value="Ribosomal RNA small subunit methyltransferase H"/>
    <property type="match status" value="1"/>
</dbReference>
<dbReference type="Gene3D" id="1.10.150.170">
    <property type="entry name" value="Putative methyltransferase TM0872, insert domain"/>
    <property type="match status" value="1"/>
</dbReference>
<dbReference type="Gene3D" id="3.40.50.150">
    <property type="entry name" value="Vaccinia Virus protein VP39"/>
    <property type="match status" value="1"/>
</dbReference>
<dbReference type="HAMAP" id="MF_01007">
    <property type="entry name" value="16SrRNA_methyltr_H"/>
    <property type="match status" value="1"/>
</dbReference>
<dbReference type="InterPro" id="IPR002903">
    <property type="entry name" value="RsmH"/>
</dbReference>
<dbReference type="InterPro" id="IPR023397">
    <property type="entry name" value="SAM-dep_MeTrfase_MraW_recog"/>
</dbReference>
<dbReference type="InterPro" id="IPR029063">
    <property type="entry name" value="SAM-dependent_MTases_sf"/>
</dbReference>
<dbReference type="NCBIfam" id="TIGR00006">
    <property type="entry name" value="16S rRNA (cytosine(1402)-N(4))-methyltransferase RsmH"/>
    <property type="match status" value="1"/>
</dbReference>
<dbReference type="PANTHER" id="PTHR11265:SF0">
    <property type="entry name" value="12S RRNA N4-METHYLCYTIDINE METHYLTRANSFERASE"/>
    <property type="match status" value="1"/>
</dbReference>
<dbReference type="PANTHER" id="PTHR11265">
    <property type="entry name" value="S-ADENOSYL-METHYLTRANSFERASE MRAW"/>
    <property type="match status" value="1"/>
</dbReference>
<dbReference type="Pfam" id="PF01795">
    <property type="entry name" value="Methyltransf_5"/>
    <property type="match status" value="1"/>
</dbReference>
<dbReference type="PIRSF" id="PIRSF004486">
    <property type="entry name" value="MraW"/>
    <property type="match status" value="1"/>
</dbReference>
<dbReference type="SUPFAM" id="SSF81799">
    <property type="entry name" value="Putative methyltransferase TM0872, insert domain"/>
    <property type="match status" value="1"/>
</dbReference>
<dbReference type="SUPFAM" id="SSF53335">
    <property type="entry name" value="S-adenosyl-L-methionine-dependent methyltransferases"/>
    <property type="match status" value="1"/>
</dbReference>
<comment type="function">
    <text evidence="1">Specifically methylates the N4 position of cytidine in position 1402 (C1402) of 16S rRNA.</text>
</comment>
<comment type="catalytic activity">
    <reaction evidence="1">
        <text>cytidine(1402) in 16S rRNA + S-adenosyl-L-methionine = N(4)-methylcytidine(1402) in 16S rRNA + S-adenosyl-L-homocysteine + H(+)</text>
        <dbReference type="Rhea" id="RHEA:42928"/>
        <dbReference type="Rhea" id="RHEA-COMP:10286"/>
        <dbReference type="Rhea" id="RHEA-COMP:10287"/>
        <dbReference type="ChEBI" id="CHEBI:15378"/>
        <dbReference type="ChEBI" id="CHEBI:57856"/>
        <dbReference type="ChEBI" id="CHEBI:59789"/>
        <dbReference type="ChEBI" id="CHEBI:74506"/>
        <dbReference type="ChEBI" id="CHEBI:82748"/>
        <dbReference type="EC" id="2.1.1.199"/>
    </reaction>
</comment>
<comment type="subcellular location">
    <subcellularLocation>
        <location evidence="1">Cytoplasm</location>
    </subcellularLocation>
</comment>
<comment type="similarity">
    <text evidence="1">Belongs to the methyltransferase superfamily. RsmH family.</text>
</comment>
<reference key="1">
    <citation type="journal article" date="2008" name="J. Bacteriol.">
        <title>The pangenome structure of Escherichia coli: comparative genomic analysis of E. coli commensal and pathogenic isolates.</title>
        <authorList>
            <person name="Rasko D.A."/>
            <person name="Rosovitz M.J."/>
            <person name="Myers G.S.A."/>
            <person name="Mongodin E.F."/>
            <person name="Fricke W.F."/>
            <person name="Gajer P."/>
            <person name="Crabtree J."/>
            <person name="Sebaihia M."/>
            <person name="Thomson N.R."/>
            <person name="Chaudhuri R."/>
            <person name="Henderson I.R."/>
            <person name="Sperandio V."/>
            <person name="Ravel J."/>
        </authorList>
    </citation>
    <scope>NUCLEOTIDE SEQUENCE [LARGE SCALE GENOMIC DNA]</scope>
    <source>
        <strain>E24377A / ETEC</strain>
    </source>
</reference>
<name>RSMH_ECO24</name>
<evidence type="ECO:0000255" key="1">
    <source>
        <dbReference type="HAMAP-Rule" id="MF_01007"/>
    </source>
</evidence>
<sequence length="313" mass="34878">MMENYKHTTVLLDEAVNGLNIRPDGIYIDGTFGRGGHSRLILSQLGEEGRLLAIDRDPQAIAVAKTIDDPRFSIIHGPFSALGEYVAERDLIGKIDGILLDLGVSSPQLDDAERGFSFMRDGPLDMRMDPTRGQSAAEWLQTAEEADIAWVLKTYGEERFAKRIARAIVERNREQPMTRTKELAEVVAAATPVKDKFKHPATRTFQAVRIWVNSELEEIEQALKSSLNVLAPGGRLSIISFHSLEDRIVKRFMRENSRGPQVPAGLPMTEEQLKKLGGRQLRALGKLMPGEEEVAENPRARSSVLRIAERTNA</sequence>